<accession>Q6PI77</accession>
<accession>Q9C0G2</accession>
<protein>
    <recommendedName>
        <fullName evidence="6">G protein-coupled receptor associated sorting protein 3</fullName>
    </recommendedName>
    <alternativeName>
        <fullName>Protein BHLHb9</fullName>
        <shortName>bHLHb9</shortName>
    </alternativeName>
    <alternativeName>
        <fullName evidence="5">Transcription regulator of 60 kDa</fullName>
        <shortName evidence="5">p60TRP</shortName>
    </alternativeName>
</protein>
<feature type="chain" id="PRO_0000334662" description="G protein-coupled receptor associated sorting protein 3">
    <location>
        <begin position="1"/>
        <end position="547"/>
    </location>
</feature>
<feature type="region of interest" description="Disordered" evidence="2">
    <location>
        <begin position="1"/>
        <end position="32"/>
    </location>
</feature>
<feature type="region of interest" description="Disordered" evidence="2">
    <location>
        <begin position="80"/>
        <end position="102"/>
    </location>
</feature>
<feature type="compositionally biased region" description="Basic residues" evidence="2">
    <location>
        <begin position="1"/>
        <end position="10"/>
    </location>
</feature>
<feature type="sequence variant" id="VAR_049266" description="In dbSNP:rs2179675.">
    <original>S</original>
    <variation>G</variation>
    <location>
        <position position="132"/>
    </location>
</feature>
<feature type="sequence variant" id="VAR_049267" description="In dbSNP:rs4514179.">
    <original>C</original>
    <variation>R</variation>
    <location>
        <position position="318"/>
    </location>
</feature>
<gene>
    <name evidence="7" type="primary">GPRASP3</name>
    <name type="synonym">BHLHB9</name>
    <name type="synonym">KIAA1701</name>
</gene>
<proteinExistence type="evidence at protein level"/>
<evidence type="ECO:0000250" key="1">
    <source>
        <dbReference type="UniProtKB" id="Q6PB60"/>
    </source>
</evidence>
<evidence type="ECO:0000256" key="2">
    <source>
        <dbReference type="SAM" id="MobiDB-lite"/>
    </source>
</evidence>
<evidence type="ECO:0000269" key="3">
    <source>
    </source>
</evidence>
<evidence type="ECO:0000269" key="4">
    <source>
    </source>
</evidence>
<evidence type="ECO:0000303" key="5">
    <source>
    </source>
</evidence>
<evidence type="ECO:0000305" key="6"/>
<evidence type="ECO:0000312" key="7">
    <source>
        <dbReference type="HGNC" id="HGNC:29353"/>
    </source>
</evidence>
<keyword id="KW-0963">Cytoplasm</keyword>
<keyword id="KW-0539">Nucleus</keyword>
<keyword id="KW-1267">Proteomics identification</keyword>
<keyword id="KW-1185">Reference proteome</keyword>
<sequence>MAGTKNKTRAQAKTEKKAAIQAKAGAEREATGVVRPVAKTRAKAKAKTGSKTDAVAEMKAVSKNKVVAETKEGALSEPKTLGKAMGDFTPKAGNESTSSTCKNEAGTDAWFWAGEEATINSWFWNGEEAGNSFSTKNDKPEIGAQVCAEELEPAAGADCKPRSGAEEEEEENVIGNWFWEGDDTSFDPNPKPVSRIVKPQPVYEINEKNRPKDWSEVTIWPNAPAVTPAVLGFRSQAPSEASPPSYIVLASAEENACSLPVATACRPSRNTRSCSQPIPECRFDSDPCIQTIDEIRRQIRIREVNGIKPFACPCKMECYMDSEEFEKLVSLLKSTTDPLIHKIARIAMGVHNVHPFAQEFINEVGVVTLIESLLSFPSPEMRKKTVITLNPPSGDERQRKIELHVKHMCKETMSFPLNSPGQQSGLKILGQLTTDFVHHYIVANYFSELFHLLSSGNCKTRNLVLKLLLNMSENPTAARDMINMKALAALKLIFNQKEAKANLVSGVAIFINIKEHIRKGSIVVVDHLSYNTLMAIFREVKEIIETM</sequence>
<organism>
    <name type="scientific">Homo sapiens</name>
    <name type="common">Human</name>
    <dbReference type="NCBI Taxonomy" id="9606"/>
    <lineage>
        <taxon>Eukaryota</taxon>
        <taxon>Metazoa</taxon>
        <taxon>Chordata</taxon>
        <taxon>Craniata</taxon>
        <taxon>Vertebrata</taxon>
        <taxon>Euteleostomi</taxon>
        <taxon>Mammalia</taxon>
        <taxon>Eutheria</taxon>
        <taxon>Euarchontoglires</taxon>
        <taxon>Primates</taxon>
        <taxon>Haplorrhini</taxon>
        <taxon>Catarrhini</taxon>
        <taxon>Hominidae</taxon>
        <taxon>Homo</taxon>
    </lineage>
</organism>
<name>GASP3_HUMAN</name>
<comment type="function">
    <text evidence="1">Survival and differentiation promoting protein that plays a role in the regulation of neurosynaptogenesis. Induces phosphatase PP2A activity which results in APP dephosphorylation and inhibits BACE1-mediated processing of APP.</text>
</comment>
<comment type="subunit">
    <text evidence="1">Homodimer.</text>
</comment>
<comment type="interaction">
    <interactant intactId="EBI-11519926">
        <id>Q6PI77</id>
    </interactant>
    <interactant intactId="EBI-17183751">
        <id>X5D778</id>
        <label>ANKRD11</label>
    </interactant>
    <organismsDiffer>false</organismsDiffer>
    <experiments>3</experiments>
</comment>
<comment type="interaction">
    <interactant intactId="EBI-11519926">
        <id>Q6PI77</id>
    </interactant>
    <interactant intactId="EBI-745213">
        <id>P29972</id>
        <label>AQP1</label>
    </interactant>
    <organismsDiffer>false</organismsDiffer>
    <experiments>3</experiments>
</comment>
<comment type="interaction">
    <interactant intactId="EBI-11519926">
        <id>Q6PI77</id>
    </interactant>
    <interactant intactId="EBI-745689">
        <id>Q7L5A3</id>
        <label>ATOSB</label>
    </interactant>
    <organismsDiffer>false</organismsDiffer>
    <experiments>3</experiments>
</comment>
<comment type="interaction">
    <interactant intactId="EBI-11519926">
        <id>Q6PI77</id>
    </interactant>
    <interactant intactId="EBI-745073">
        <id>Q9BXY8</id>
        <label>BEX2</label>
    </interactant>
    <organismsDiffer>false</organismsDiffer>
    <experiments>3</experiments>
</comment>
<comment type="interaction">
    <interactant intactId="EBI-11519926">
        <id>Q6PI77</id>
    </interactant>
    <interactant intactId="EBI-739879">
        <id>Q53TS8</id>
        <label>C2CD6</label>
    </interactant>
    <organismsDiffer>false</organismsDiffer>
    <experiments>3</experiments>
</comment>
<comment type="interaction">
    <interactant intactId="EBI-11519926">
        <id>Q6PI77</id>
    </interactant>
    <interactant intactId="EBI-744556">
        <id>Q96HB5</id>
        <label>CCDC120</label>
    </interactant>
    <organismsDiffer>false</organismsDiffer>
    <experiments>3</experiments>
</comment>
<comment type="interaction">
    <interactant intactId="EBI-11519926">
        <id>Q6PI77</id>
    </interactant>
    <interactant intactId="EBI-396137">
        <id>Q9UJX2</id>
        <label>CDC23</label>
    </interactant>
    <organismsDiffer>false</organismsDiffer>
    <experiments>3</experiments>
</comment>
<comment type="interaction">
    <interactant intactId="EBI-11519926">
        <id>Q6PI77</id>
    </interactant>
    <interactant intactId="EBI-295634">
        <id>Q16543</id>
        <label>CDC37</label>
    </interactant>
    <organismsDiffer>false</organismsDiffer>
    <experiments>3</experiments>
</comment>
<comment type="interaction">
    <interactant intactId="EBI-11519926">
        <id>Q6PI77</id>
    </interactant>
    <interactant intactId="EBI-5278764">
        <id>Q96GN5</id>
        <label>CDCA7L</label>
    </interactant>
    <organismsDiffer>false</organismsDiffer>
    <experiments>3</experiments>
</comment>
<comment type="interaction">
    <interactant intactId="EBI-11519926">
        <id>Q6PI77</id>
    </interactant>
    <interactant intactId="EBI-6873363">
        <id>Q8WUE5</id>
        <label>CT55</label>
    </interactant>
    <organismsDiffer>false</organismsDiffer>
    <experiments>3</experiments>
</comment>
<comment type="interaction">
    <interactant intactId="EBI-11519926">
        <id>Q6PI77</id>
    </interactant>
    <interactant intactId="EBI-351257">
        <id>P26196</id>
        <label>DDX6</label>
    </interactant>
    <organismsDiffer>false</organismsDiffer>
    <experiments>3</experiments>
</comment>
<comment type="interaction">
    <interactant intactId="EBI-11519926">
        <id>Q6PI77</id>
    </interactant>
    <interactant intactId="EBI-769261">
        <id>Q96JC9</id>
        <label>EAF1</label>
    </interactant>
    <organismsDiffer>false</organismsDiffer>
    <experiments>3</experiments>
</comment>
<comment type="interaction">
    <interactant intactId="EBI-11519926">
        <id>Q6PI77</id>
    </interactant>
    <interactant intactId="EBI-744099">
        <id>Q9H0I2</id>
        <label>ENKD1</label>
    </interactant>
    <organismsDiffer>false</organismsDiffer>
    <experiments>3</experiments>
</comment>
<comment type="interaction">
    <interactant intactId="EBI-11519926">
        <id>Q6PI77</id>
    </interactant>
    <interactant intactId="EBI-11986315">
        <id>Q9H5Z6-2</id>
        <label>FAM124B</label>
    </interactant>
    <organismsDiffer>false</organismsDiffer>
    <experiments>3</experiments>
</comment>
<comment type="interaction">
    <interactant intactId="EBI-11519926">
        <id>Q6PI77</id>
    </interactant>
    <interactant intactId="EBI-719941">
        <id>Q3B820</id>
        <label>FAM161A</label>
    </interactant>
    <organismsDiffer>false</organismsDiffer>
    <experiments>3</experiments>
</comment>
<comment type="interaction">
    <interactant intactId="EBI-11519926">
        <id>Q6PI77</id>
    </interactant>
    <interactant intactId="EBI-6658203">
        <id>Q86YD7</id>
        <label>FAM90A1</label>
    </interactant>
    <organismsDiffer>false</organismsDiffer>
    <experiments>3</experiments>
</comment>
<comment type="interaction">
    <interactant intactId="EBI-11519926">
        <id>Q6PI77</id>
    </interactant>
    <interactant intactId="EBI-1052570">
        <id>O95995</id>
        <label>GAS8</label>
    </interactant>
    <organismsDiffer>false</organismsDiffer>
    <experiments>3</experiments>
</comment>
<comment type="interaction">
    <interactant intactId="EBI-11519926">
        <id>Q6PI77</id>
    </interactant>
    <interactant intactId="EBI-744104">
        <id>P55040</id>
        <label>GEM</label>
    </interactant>
    <organismsDiffer>false</organismsDiffer>
    <experiments>3</experiments>
</comment>
<comment type="interaction">
    <interactant intactId="EBI-11519926">
        <id>Q6PI77</id>
    </interactant>
    <interactant intactId="EBI-751540">
        <id>O95872</id>
        <label>GPANK1</label>
    </interactant>
    <organismsDiffer>false</organismsDiffer>
    <experiments>3</experiments>
</comment>
<comment type="interaction">
    <interactant intactId="EBI-11519926">
        <id>Q6PI77</id>
    </interactant>
    <interactant intactId="EBI-740785">
        <id>P49639</id>
        <label>HOXA1</label>
    </interactant>
    <organismsDiffer>false</organismsDiffer>
    <experiments>3</experiments>
</comment>
<comment type="interaction">
    <interactant intactId="EBI-11519926">
        <id>Q6PI77</id>
    </interactant>
    <interactant intactId="EBI-715611">
        <id>Q9C086</id>
        <label>INO80B</label>
    </interactant>
    <organismsDiffer>false</organismsDiffer>
    <experiments>3</experiments>
</comment>
<comment type="interaction">
    <interactant intactId="EBI-11519926">
        <id>Q6PI77</id>
    </interactant>
    <interactant intactId="EBI-10220600">
        <id>Q8NA54</id>
        <label>IQUB</label>
    </interactant>
    <organismsDiffer>false</organismsDiffer>
    <experiments>3</experiments>
</comment>
<comment type="interaction">
    <interactant intactId="EBI-11519926">
        <id>Q6PI77</id>
    </interactant>
    <interactant intactId="EBI-6426443">
        <id>Q2WGJ6</id>
        <label>KLHL38</label>
    </interactant>
    <organismsDiffer>false</organismsDiffer>
    <experiments>3</experiments>
</comment>
<comment type="interaction">
    <interactant intactId="EBI-11519926">
        <id>Q6PI77</id>
    </interactant>
    <interactant intactId="EBI-739909">
        <id>Q969R5</id>
        <label>L3MBTL2</label>
    </interactant>
    <organismsDiffer>false</organismsDiffer>
    <experiments>3</experiments>
</comment>
<comment type="interaction">
    <interactant intactId="EBI-11519926">
        <id>Q6PI77</id>
    </interactant>
    <interactant intactId="EBI-932432">
        <id>Q8WVC0</id>
        <label>LEO1</label>
    </interactant>
    <organismsDiffer>false</organismsDiffer>
    <experiments>3</experiments>
</comment>
<comment type="interaction">
    <interactant intactId="EBI-11519926">
        <id>Q6PI77</id>
    </interactant>
    <interactant intactId="EBI-8639312">
        <id>P25800</id>
        <label>LMO1</label>
    </interactant>
    <organismsDiffer>false</organismsDiffer>
    <experiments>3</experiments>
</comment>
<comment type="interaction">
    <interactant intactId="EBI-11519926">
        <id>Q6PI77</id>
    </interactant>
    <interactant intactId="EBI-2341787">
        <id>Q17RB8</id>
        <label>LONRF1</label>
    </interactant>
    <organismsDiffer>false</organismsDiffer>
    <experiments>3</experiments>
</comment>
<comment type="interaction">
    <interactant intactId="EBI-11519926">
        <id>Q6PI77</id>
    </interactant>
    <interactant intactId="EBI-1048159">
        <id>P55081</id>
        <label>MFAP1</label>
    </interactant>
    <organismsDiffer>false</organismsDiffer>
    <experiments>3</experiments>
</comment>
<comment type="interaction">
    <interactant intactId="EBI-11519926">
        <id>Q6PI77</id>
    </interactant>
    <interactant intactId="EBI-2555085">
        <id>Q8IVT2</id>
        <label>MISP</label>
    </interactant>
    <organismsDiffer>false</organismsDiffer>
    <experiments>3</experiments>
</comment>
<comment type="interaction">
    <interactant intactId="EBI-11519926">
        <id>Q6PI77</id>
    </interactant>
    <interactant intactId="EBI-711788">
        <id>Q00013</id>
        <label>MPP1</label>
    </interactant>
    <organismsDiffer>false</organismsDiffer>
    <experiments>3</experiments>
</comment>
<comment type="interaction">
    <interactant intactId="EBI-11519926">
        <id>Q6PI77</id>
    </interactant>
    <interactant intactId="EBI-7950783">
        <id>Q96JP2</id>
        <label>MYO15B</label>
    </interactant>
    <organismsDiffer>false</organismsDiffer>
    <experiments>3</experiments>
</comment>
<comment type="interaction">
    <interactant intactId="EBI-11519926">
        <id>Q6PI77</id>
    </interactant>
    <interactant intactId="EBI-746484">
        <id>P48552</id>
        <label>NRIP1</label>
    </interactant>
    <organismsDiffer>false</organismsDiffer>
    <experiments>3</experiments>
</comment>
<comment type="interaction">
    <interactant intactId="EBI-11519926">
        <id>Q6PI77</id>
    </interactant>
    <interactant intactId="EBI-740446">
        <id>P32242</id>
        <label>OTX1</label>
    </interactant>
    <organismsDiffer>false</organismsDiffer>
    <experiments>3</experiments>
</comment>
<comment type="interaction">
    <interactant intactId="EBI-11519926">
        <id>Q6PI77</id>
    </interactant>
    <interactant intactId="EBI-2513978">
        <id>Q8N3R9</id>
        <label>PALS1</label>
    </interactant>
    <organismsDiffer>false</organismsDiffer>
    <experiments>3</experiments>
</comment>
<comment type="interaction">
    <interactant intactId="EBI-11519926">
        <id>Q6PI77</id>
    </interactant>
    <interactant intactId="EBI-530034">
        <id>O43189</id>
        <label>PHF1</label>
    </interactant>
    <organismsDiffer>false</organismsDiffer>
    <experiments>5</experiments>
</comment>
<comment type="interaction">
    <interactant intactId="EBI-11519926">
        <id>Q6PI77</id>
    </interactant>
    <interactant intactId="EBI-10171633">
        <id>Q96PV4</id>
        <label>PNMA5</label>
    </interactant>
    <organismsDiffer>false</organismsDiffer>
    <experiments>3</experiments>
</comment>
<comment type="interaction">
    <interactant intactId="EBI-11519926">
        <id>Q6PI77</id>
    </interactant>
    <interactant intactId="EBI-1055079">
        <id>O15160</id>
        <label>POLR1C</label>
    </interactant>
    <organismsDiffer>false</organismsDiffer>
    <experiments>3</experiments>
</comment>
<comment type="interaction">
    <interactant intactId="EBI-11519926">
        <id>Q6PI77</id>
    </interactant>
    <interactant intactId="EBI-1053424">
        <id>O43741</id>
        <label>PRKAB2</label>
    </interactant>
    <organismsDiffer>false</organismsDiffer>
    <experiments>3</experiments>
</comment>
<comment type="interaction">
    <interactant intactId="EBI-11519926">
        <id>Q6PI77</id>
    </interactant>
    <interactant intactId="EBI-1567797">
        <id>Q8WWY3</id>
        <label>PRPF31</label>
    </interactant>
    <organismsDiffer>false</organismsDiffer>
    <experiments>3</experiments>
</comment>
<comment type="interaction">
    <interactant intactId="EBI-11519926">
        <id>Q6PI77</id>
    </interactant>
    <interactant intactId="EBI-1504830">
        <id>Q9P2K3-2</id>
        <label>RCOR3</label>
    </interactant>
    <organismsDiffer>false</organismsDiffer>
    <experiments>3</experiments>
</comment>
<comment type="interaction">
    <interactant intactId="EBI-11519926">
        <id>Q6PI77</id>
    </interactant>
    <interactant intactId="EBI-748391">
        <id>Q9BWG6</id>
        <label>SCNM1</label>
    </interactant>
    <organismsDiffer>false</organismsDiffer>
    <experiments>3</experiments>
</comment>
<comment type="interaction">
    <interactant intactId="EBI-11519926">
        <id>Q6PI77</id>
    </interactant>
    <interactant intactId="EBI-346595">
        <id>Q96B97</id>
        <label>SH3KBP1</label>
    </interactant>
    <organismsDiffer>false</organismsDiffer>
    <experiments>5</experiments>
</comment>
<comment type="interaction">
    <interactant intactId="EBI-11519926">
        <id>Q6PI77</id>
    </interactant>
    <interactant intactId="EBI-358489">
        <id>Q96GM5</id>
        <label>SMARCD1</label>
    </interactant>
    <organismsDiffer>false</organismsDiffer>
    <experiments>3</experiments>
</comment>
<comment type="interaction">
    <interactant intactId="EBI-11519926">
        <id>Q6PI77</id>
    </interactant>
    <interactant intactId="EBI-12023934">
        <id>Q5MJ10</id>
        <label>SPANXN2</label>
    </interactant>
    <organismsDiffer>false</organismsDiffer>
    <experiments>3</experiments>
</comment>
<comment type="interaction">
    <interactant intactId="EBI-11519926">
        <id>Q6PI77</id>
    </interactant>
    <interactant intactId="EBI-12029182">
        <id>Q6ZRS2-3</id>
        <label>SRCAP</label>
    </interactant>
    <organismsDiffer>false</organismsDiffer>
    <experiments>3</experiments>
</comment>
<comment type="interaction">
    <interactant intactId="EBI-11519926">
        <id>Q6PI77</id>
    </interactant>
    <interactant intactId="EBI-745958">
        <id>Q5VWN6</id>
        <label>TASOR2</label>
    </interactant>
    <organismsDiffer>false</organismsDiffer>
    <experiments>3</experiments>
</comment>
<comment type="interaction">
    <interactant intactId="EBI-11519926">
        <id>Q6PI77</id>
    </interactant>
    <interactant intactId="EBI-710310">
        <id>Q15560</id>
        <label>TCEA2</label>
    </interactant>
    <organismsDiffer>false</organismsDiffer>
    <experiments>3</experiments>
</comment>
<comment type="interaction">
    <interactant intactId="EBI-11519926">
        <id>Q6PI77</id>
    </interactant>
    <interactant intactId="EBI-11139477">
        <id>Q96N21</id>
        <label>TEPSIN</label>
    </interactant>
    <organismsDiffer>false</organismsDiffer>
    <experiments>3</experiments>
</comment>
<comment type="interaction">
    <interactant intactId="EBI-11519926">
        <id>Q6PI77</id>
    </interactant>
    <interactant intactId="EBI-1765605">
        <id>Q96FV9</id>
        <label>THOC1</label>
    </interactant>
    <organismsDiffer>false</organismsDiffer>
    <experiments>3</experiments>
</comment>
<comment type="interaction">
    <interactant intactId="EBI-11519926">
        <id>Q6PI77</id>
    </interactant>
    <interactant intactId="EBI-740492">
        <id>Q9UKI8</id>
        <label>TLK1</label>
    </interactant>
    <organismsDiffer>false</organismsDiffer>
    <experiments>3</experiments>
</comment>
<comment type="interaction">
    <interactant intactId="EBI-11519926">
        <id>Q6PI77</id>
    </interactant>
    <interactant intactId="EBI-373403">
        <id>O95985</id>
        <label>TOP3B</label>
    </interactant>
    <organismsDiffer>false</organismsDiffer>
    <experiments>3</experiments>
</comment>
<comment type="interaction">
    <interactant intactId="EBI-11519926">
        <id>Q6PI77</id>
    </interactant>
    <interactant intactId="EBI-10241197">
        <id>Q3SY00</id>
        <label>TSGA10IP</label>
    </interactant>
    <organismsDiffer>false</organismsDiffer>
    <experiments>3</experiments>
</comment>
<comment type="interaction">
    <interactant intactId="EBI-11519926">
        <id>Q6PI77</id>
    </interactant>
    <interactant intactId="EBI-2932492">
        <id>Q99757</id>
        <label>TXN2</label>
    </interactant>
    <organismsDiffer>false</organismsDiffer>
    <experiments>3</experiments>
</comment>
<comment type="interaction">
    <interactant intactId="EBI-11519926">
        <id>Q6PI77</id>
    </interactant>
    <interactant intactId="EBI-743272">
        <id>O75604</id>
        <label>USP2</label>
    </interactant>
    <organismsDiffer>false</organismsDiffer>
    <experiments>3</experiments>
</comment>
<comment type="interaction">
    <interactant intactId="EBI-11519926">
        <id>Q6PI77</id>
    </interactant>
    <interactant intactId="EBI-2511991">
        <id>Q9Y2K6</id>
        <label>USP20</label>
    </interactant>
    <organismsDiffer>false</organismsDiffer>
    <experiments>3</experiments>
</comment>
<comment type="interaction">
    <interactant intactId="EBI-11519926">
        <id>Q6PI77</id>
    </interactant>
    <interactant intactId="EBI-740727">
        <id>Q8TAU3</id>
        <label>ZNF417</label>
    </interactant>
    <organismsDiffer>false</organismsDiffer>
    <experiments>3</experiments>
</comment>
<comment type="subcellular location">
    <subcellularLocation>
        <location evidence="3">Cytoplasm</location>
    </subcellularLocation>
    <subcellularLocation>
        <location evidence="3">Nucleus</location>
    </subcellularLocation>
    <text>Mainly cytoplasmic, and nuclear at lower level.</text>
</comment>
<comment type="tissue specificity">
    <text evidence="3">Highly expressed in brain. Not expressed in lung or liver. Down-regulated in brain from patients suffering from Alzheimer disease.</text>
</comment>
<comment type="induction">
    <text evidence="4">Down-regulated in colon cancer cells, due to CpG hypermethylation of its promoter.</text>
</comment>
<comment type="similarity">
    <text evidence="6">Belongs to the GPRASP family.</text>
</comment>
<comment type="caution">
    <text evidence="6">Despite its name, no basic helix-loop-helix (bHLH) domain is detected by any prediction tool.</text>
</comment>
<comment type="sequence caution" evidence="6">
    <conflict type="erroneous initiation">
        <sequence resource="EMBL-CDS" id="BAB21792"/>
    </conflict>
    <text>Extended N-terminus.</text>
</comment>
<reference key="1">
    <citation type="journal article" date="2004" name="J. Cell. Biochem.">
        <title>Characterizing the new transcription regulator protein p60TRP.</title>
        <authorList>
            <person name="Heese K."/>
            <person name="Yamada T."/>
            <person name="Akatsu H."/>
            <person name="Yamamoto T."/>
            <person name="Kosaka K."/>
            <person name="Nagai Y."/>
            <person name="Sawada T."/>
        </authorList>
    </citation>
    <scope>NUCLEOTIDE SEQUENCE [MRNA]</scope>
    <scope>POSSIBLE FUNCTION</scope>
    <scope>SUBCELLULAR LOCATION</scope>
    <scope>TISSUE SPECIFICITY</scope>
</reference>
<reference key="2">
    <citation type="journal article" date="2000" name="DNA Res.">
        <title>Prediction of the coding sequences of unidentified human genes. XIX. The complete sequences of 100 new cDNA clones from brain which code for large proteins in vitro.</title>
        <authorList>
            <person name="Nagase T."/>
            <person name="Kikuno R."/>
            <person name="Hattori A."/>
            <person name="Kondo Y."/>
            <person name="Okumura K."/>
            <person name="Ohara O."/>
        </authorList>
    </citation>
    <scope>NUCLEOTIDE SEQUENCE [LARGE SCALE MRNA]</scope>
    <source>
        <tissue>Brain</tissue>
    </source>
</reference>
<reference key="3">
    <citation type="journal article" date="2005" name="Nature">
        <title>The DNA sequence of the human X chromosome.</title>
        <authorList>
            <person name="Ross M.T."/>
            <person name="Grafham D.V."/>
            <person name="Coffey A.J."/>
            <person name="Scherer S."/>
            <person name="McLay K."/>
            <person name="Muzny D."/>
            <person name="Platzer M."/>
            <person name="Howell G.R."/>
            <person name="Burrows C."/>
            <person name="Bird C.P."/>
            <person name="Frankish A."/>
            <person name="Lovell F.L."/>
            <person name="Howe K.L."/>
            <person name="Ashurst J.L."/>
            <person name="Fulton R.S."/>
            <person name="Sudbrak R."/>
            <person name="Wen G."/>
            <person name="Jones M.C."/>
            <person name="Hurles M.E."/>
            <person name="Andrews T.D."/>
            <person name="Scott C.E."/>
            <person name="Searle S."/>
            <person name="Ramser J."/>
            <person name="Whittaker A."/>
            <person name="Deadman R."/>
            <person name="Carter N.P."/>
            <person name="Hunt S.E."/>
            <person name="Chen R."/>
            <person name="Cree A."/>
            <person name="Gunaratne P."/>
            <person name="Havlak P."/>
            <person name="Hodgson A."/>
            <person name="Metzker M.L."/>
            <person name="Richards S."/>
            <person name="Scott G."/>
            <person name="Steffen D."/>
            <person name="Sodergren E."/>
            <person name="Wheeler D.A."/>
            <person name="Worley K.C."/>
            <person name="Ainscough R."/>
            <person name="Ambrose K.D."/>
            <person name="Ansari-Lari M.A."/>
            <person name="Aradhya S."/>
            <person name="Ashwell R.I."/>
            <person name="Babbage A.K."/>
            <person name="Bagguley C.L."/>
            <person name="Ballabio A."/>
            <person name="Banerjee R."/>
            <person name="Barker G.E."/>
            <person name="Barlow K.F."/>
            <person name="Barrett I.P."/>
            <person name="Bates K.N."/>
            <person name="Beare D.M."/>
            <person name="Beasley H."/>
            <person name="Beasley O."/>
            <person name="Beck A."/>
            <person name="Bethel G."/>
            <person name="Blechschmidt K."/>
            <person name="Brady N."/>
            <person name="Bray-Allen S."/>
            <person name="Bridgeman A.M."/>
            <person name="Brown A.J."/>
            <person name="Brown M.J."/>
            <person name="Bonnin D."/>
            <person name="Bruford E.A."/>
            <person name="Buhay C."/>
            <person name="Burch P."/>
            <person name="Burford D."/>
            <person name="Burgess J."/>
            <person name="Burrill W."/>
            <person name="Burton J."/>
            <person name="Bye J.M."/>
            <person name="Carder C."/>
            <person name="Carrel L."/>
            <person name="Chako J."/>
            <person name="Chapman J.C."/>
            <person name="Chavez D."/>
            <person name="Chen E."/>
            <person name="Chen G."/>
            <person name="Chen Y."/>
            <person name="Chen Z."/>
            <person name="Chinault C."/>
            <person name="Ciccodicola A."/>
            <person name="Clark S.Y."/>
            <person name="Clarke G."/>
            <person name="Clee C.M."/>
            <person name="Clegg S."/>
            <person name="Clerc-Blankenburg K."/>
            <person name="Clifford K."/>
            <person name="Cobley V."/>
            <person name="Cole C.G."/>
            <person name="Conquer J.S."/>
            <person name="Corby N."/>
            <person name="Connor R.E."/>
            <person name="David R."/>
            <person name="Davies J."/>
            <person name="Davis C."/>
            <person name="Davis J."/>
            <person name="Delgado O."/>
            <person name="Deshazo D."/>
            <person name="Dhami P."/>
            <person name="Ding Y."/>
            <person name="Dinh H."/>
            <person name="Dodsworth S."/>
            <person name="Draper H."/>
            <person name="Dugan-Rocha S."/>
            <person name="Dunham A."/>
            <person name="Dunn M."/>
            <person name="Durbin K.J."/>
            <person name="Dutta I."/>
            <person name="Eades T."/>
            <person name="Ellwood M."/>
            <person name="Emery-Cohen A."/>
            <person name="Errington H."/>
            <person name="Evans K.L."/>
            <person name="Faulkner L."/>
            <person name="Francis F."/>
            <person name="Frankland J."/>
            <person name="Fraser A.E."/>
            <person name="Galgoczy P."/>
            <person name="Gilbert J."/>
            <person name="Gill R."/>
            <person name="Gloeckner G."/>
            <person name="Gregory S.G."/>
            <person name="Gribble S."/>
            <person name="Griffiths C."/>
            <person name="Grocock R."/>
            <person name="Gu Y."/>
            <person name="Gwilliam R."/>
            <person name="Hamilton C."/>
            <person name="Hart E.A."/>
            <person name="Hawes A."/>
            <person name="Heath P.D."/>
            <person name="Heitmann K."/>
            <person name="Hennig S."/>
            <person name="Hernandez J."/>
            <person name="Hinzmann B."/>
            <person name="Ho S."/>
            <person name="Hoffs M."/>
            <person name="Howden P.J."/>
            <person name="Huckle E.J."/>
            <person name="Hume J."/>
            <person name="Hunt P.J."/>
            <person name="Hunt A.R."/>
            <person name="Isherwood J."/>
            <person name="Jacob L."/>
            <person name="Johnson D."/>
            <person name="Jones S."/>
            <person name="de Jong P.J."/>
            <person name="Joseph S.S."/>
            <person name="Keenan S."/>
            <person name="Kelly S."/>
            <person name="Kershaw J.K."/>
            <person name="Khan Z."/>
            <person name="Kioschis P."/>
            <person name="Klages S."/>
            <person name="Knights A.J."/>
            <person name="Kosiura A."/>
            <person name="Kovar-Smith C."/>
            <person name="Laird G.K."/>
            <person name="Langford C."/>
            <person name="Lawlor S."/>
            <person name="Leversha M."/>
            <person name="Lewis L."/>
            <person name="Liu W."/>
            <person name="Lloyd C."/>
            <person name="Lloyd D.M."/>
            <person name="Loulseged H."/>
            <person name="Loveland J.E."/>
            <person name="Lovell J.D."/>
            <person name="Lozado R."/>
            <person name="Lu J."/>
            <person name="Lyne R."/>
            <person name="Ma J."/>
            <person name="Maheshwari M."/>
            <person name="Matthews L.H."/>
            <person name="McDowall J."/>
            <person name="McLaren S."/>
            <person name="McMurray A."/>
            <person name="Meidl P."/>
            <person name="Meitinger T."/>
            <person name="Milne S."/>
            <person name="Miner G."/>
            <person name="Mistry S.L."/>
            <person name="Morgan M."/>
            <person name="Morris S."/>
            <person name="Mueller I."/>
            <person name="Mullikin J.C."/>
            <person name="Nguyen N."/>
            <person name="Nordsiek G."/>
            <person name="Nyakatura G."/>
            <person name="O'dell C.N."/>
            <person name="Okwuonu G."/>
            <person name="Palmer S."/>
            <person name="Pandian R."/>
            <person name="Parker D."/>
            <person name="Parrish J."/>
            <person name="Pasternak S."/>
            <person name="Patel D."/>
            <person name="Pearce A.V."/>
            <person name="Pearson D.M."/>
            <person name="Pelan S.E."/>
            <person name="Perez L."/>
            <person name="Porter K.M."/>
            <person name="Ramsey Y."/>
            <person name="Reichwald K."/>
            <person name="Rhodes S."/>
            <person name="Ridler K.A."/>
            <person name="Schlessinger D."/>
            <person name="Schueler M.G."/>
            <person name="Sehra H.K."/>
            <person name="Shaw-Smith C."/>
            <person name="Shen H."/>
            <person name="Sheridan E.M."/>
            <person name="Shownkeen R."/>
            <person name="Skuce C.D."/>
            <person name="Smith M.L."/>
            <person name="Sotheran E.C."/>
            <person name="Steingruber H.E."/>
            <person name="Steward C.A."/>
            <person name="Storey R."/>
            <person name="Swann R.M."/>
            <person name="Swarbreck D."/>
            <person name="Tabor P.E."/>
            <person name="Taudien S."/>
            <person name="Taylor T."/>
            <person name="Teague B."/>
            <person name="Thomas K."/>
            <person name="Thorpe A."/>
            <person name="Timms K."/>
            <person name="Tracey A."/>
            <person name="Trevanion S."/>
            <person name="Tromans A.C."/>
            <person name="d'Urso M."/>
            <person name="Verduzco D."/>
            <person name="Villasana D."/>
            <person name="Waldron L."/>
            <person name="Wall M."/>
            <person name="Wang Q."/>
            <person name="Warren J."/>
            <person name="Warry G.L."/>
            <person name="Wei X."/>
            <person name="West A."/>
            <person name="Whitehead S.L."/>
            <person name="Whiteley M.N."/>
            <person name="Wilkinson J.E."/>
            <person name="Willey D.L."/>
            <person name="Williams G."/>
            <person name="Williams L."/>
            <person name="Williamson A."/>
            <person name="Williamson H."/>
            <person name="Wilming L."/>
            <person name="Woodmansey R.L."/>
            <person name="Wray P.W."/>
            <person name="Yen J."/>
            <person name="Zhang J."/>
            <person name="Zhou J."/>
            <person name="Zoghbi H."/>
            <person name="Zorilla S."/>
            <person name="Buck D."/>
            <person name="Reinhardt R."/>
            <person name="Poustka A."/>
            <person name="Rosenthal A."/>
            <person name="Lehrach H."/>
            <person name="Meindl A."/>
            <person name="Minx P.J."/>
            <person name="Hillier L.W."/>
            <person name="Willard H.F."/>
            <person name="Wilson R.K."/>
            <person name="Waterston R.H."/>
            <person name="Rice C.M."/>
            <person name="Vaudin M."/>
            <person name="Coulson A."/>
            <person name="Nelson D.L."/>
            <person name="Weinstock G."/>
            <person name="Sulston J.E."/>
            <person name="Durbin R.M."/>
            <person name="Hubbard T."/>
            <person name="Gibbs R.A."/>
            <person name="Beck S."/>
            <person name="Rogers J."/>
            <person name="Bentley D.R."/>
        </authorList>
    </citation>
    <scope>NUCLEOTIDE SEQUENCE [LARGE SCALE GENOMIC DNA]</scope>
</reference>
<reference key="4">
    <citation type="submission" date="2005-09" db="EMBL/GenBank/DDBJ databases">
        <authorList>
            <person name="Mural R.J."/>
            <person name="Istrail S."/>
            <person name="Sutton G.G."/>
            <person name="Florea L."/>
            <person name="Halpern A.L."/>
            <person name="Mobarry C.M."/>
            <person name="Lippert R."/>
            <person name="Walenz B."/>
            <person name="Shatkay H."/>
            <person name="Dew I."/>
            <person name="Miller J.R."/>
            <person name="Flanigan M.J."/>
            <person name="Edwards N.J."/>
            <person name="Bolanos R."/>
            <person name="Fasulo D."/>
            <person name="Halldorsson B.V."/>
            <person name="Hannenhalli S."/>
            <person name="Turner R."/>
            <person name="Yooseph S."/>
            <person name="Lu F."/>
            <person name="Nusskern D.R."/>
            <person name="Shue B.C."/>
            <person name="Zheng X.H."/>
            <person name="Zhong F."/>
            <person name="Delcher A.L."/>
            <person name="Huson D.H."/>
            <person name="Kravitz S.A."/>
            <person name="Mouchard L."/>
            <person name="Reinert K."/>
            <person name="Remington K.A."/>
            <person name="Clark A.G."/>
            <person name="Waterman M.S."/>
            <person name="Eichler E.E."/>
            <person name="Adams M.D."/>
            <person name="Hunkapiller M.W."/>
            <person name="Myers E.W."/>
            <person name="Venter J.C."/>
        </authorList>
    </citation>
    <scope>NUCLEOTIDE SEQUENCE [LARGE SCALE GENOMIC DNA]</scope>
</reference>
<reference key="5">
    <citation type="journal article" date="2004" name="Genome Res.">
        <title>The status, quality, and expansion of the NIH full-length cDNA project: the Mammalian Gene Collection (MGC).</title>
        <authorList>
            <consortium name="The MGC Project Team"/>
        </authorList>
    </citation>
    <scope>NUCLEOTIDE SEQUENCE [LARGE SCALE MRNA]</scope>
    <source>
        <tissue>Brain</tissue>
    </source>
</reference>
<reference key="6">
    <citation type="journal article" date="2007" name="Cancer Res.">
        <title>Discovery of epigenetically silenced genes by methylated DNA immunoprecipitation in colon cancer cells.</title>
        <authorList>
            <person name="Jacinto F.V."/>
            <person name="Ballestar E."/>
            <person name="Ropero S."/>
            <person name="Esteller M."/>
        </authorList>
    </citation>
    <scope>INDUCTION</scope>
</reference>
<dbReference type="EMBL" id="AF547055">
    <property type="protein sequence ID" value="AAQ12077.1"/>
    <property type="molecule type" value="mRNA"/>
</dbReference>
<dbReference type="EMBL" id="AB051488">
    <property type="protein sequence ID" value="BAB21792.1"/>
    <property type="status" value="ALT_INIT"/>
    <property type="molecule type" value="mRNA"/>
</dbReference>
<dbReference type="EMBL" id="AL035427">
    <property type="status" value="NOT_ANNOTATED_CDS"/>
    <property type="molecule type" value="Genomic_DNA"/>
</dbReference>
<dbReference type="EMBL" id="CH471190">
    <property type="protein sequence ID" value="EAW54726.1"/>
    <property type="molecule type" value="Genomic_DNA"/>
</dbReference>
<dbReference type="EMBL" id="BC041409">
    <property type="protein sequence ID" value="AAH41409.1"/>
    <property type="molecule type" value="mRNA"/>
</dbReference>
<dbReference type="RefSeq" id="NP_001135996.1">
    <property type="nucleotide sequence ID" value="NM_001142524.2"/>
</dbReference>
<dbReference type="RefSeq" id="NP_001135997.1">
    <property type="nucleotide sequence ID" value="NM_001142525.2"/>
</dbReference>
<dbReference type="RefSeq" id="NP_001135998.1">
    <property type="nucleotide sequence ID" value="NM_001142526.2"/>
</dbReference>
<dbReference type="RefSeq" id="NP_001135999.1">
    <property type="nucleotide sequence ID" value="NM_001142527.2"/>
</dbReference>
<dbReference type="RefSeq" id="NP_001136000.1">
    <property type="nucleotide sequence ID" value="NM_001142528.2"/>
</dbReference>
<dbReference type="RefSeq" id="NP_001136001.1">
    <property type="nucleotide sequence ID" value="NM_001142529.1"/>
</dbReference>
<dbReference type="RefSeq" id="NP_001136002.1">
    <property type="nucleotide sequence ID" value="NM_001142530.1"/>
</dbReference>
<dbReference type="RefSeq" id="NP_085142.1">
    <property type="nucleotide sequence ID" value="NM_030639.3"/>
</dbReference>
<dbReference type="SMR" id="Q6PI77"/>
<dbReference type="BioGRID" id="123320">
    <property type="interactions" value="60"/>
</dbReference>
<dbReference type="FunCoup" id="Q6PI77">
    <property type="interactions" value="233"/>
</dbReference>
<dbReference type="IntAct" id="Q6PI77">
    <property type="interactions" value="66"/>
</dbReference>
<dbReference type="MINT" id="Q6PI77"/>
<dbReference type="STRING" id="9606.ENSP00000403226"/>
<dbReference type="GlyGen" id="Q6PI77">
    <property type="glycosylation" value="2 sites, 1 O-linked glycan (1 site)"/>
</dbReference>
<dbReference type="iPTMnet" id="Q6PI77"/>
<dbReference type="PhosphoSitePlus" id="Q6PI77"/>
<dbReference type="BioMuta" id="BHLHB9"/>
<dbReference type="DMDM" id="74749201"/>
<dbReference type="jPOST" id="Q6PI77"/>
<dbReference type="MassIVE" id="Q6PI77"/>
<dbReference type="PaxDb" id="9606-ENSP00000361820"/>
<dbReference type="PeptideAtlas" id="Q6PI77"/>
<dbReference type="ProteomicsDB" id="67143"/>
<dbReference type="Pumba" id="Q6PI77"/>
<dbReference type="Antibodypedia" id="28945">
    <property type="antibodies" value="47 antibodies from 12 providers"/>
</dbReference>
<dbReference type="DNASU" id="80823"/>
<dbReference type="Ensembl" id="ENST00000361229.8">
    <property type="protein sequence ID" value="ENSP00000354675.4"/>
    <property type="gene ID" value="ENSG00000198908.12"/>
</dbReference>
<dbReference type="Ensembl" id="ENST00000372735.1">
    <property type="protein sequence ID" value="ENSP00000361820.1"/>
    <property type="gene ID" value="ENSG00000198908.12"/>
</dbReference>
<dbReference type="Ensembl" id="ENST00000447531.5">
    <property type="protein sequence ID" value="ENSP00000405893.1"/>
    <property type="gene ID" value="ENSG00000198908.12"/>
</dbReference>
<dbReference type="Ensembl" id="ENST00000448867.1">
    <property type="protein sequence ID" value="ENSP00000391722.1"/>
    <property type="gene ID" value="ENSG00000198908.12"/>
</dbReference>
<dbReference type="Ensembl" id="ENST00000457056.6">
    <property type="protein sequence ID" value="ENSP00000403226.1"/>
    <property type="gene ID" value="ENSG00000198908.12"/>
</dbReference>
<dbReference type="GeneID" id="80823"/>
<dbReference type="KEGG" id="hsa:80823"/>
<dbReference type="MANE-Select" id="ENST00000457056.6">
    <property type="protein sequence ID" value="ENSP00000403226.1"/>
    <property type="RefSeq nucleotide sequence ID" value="NM_001142524.2"/>
    <property type="RefSeq protein sequence ID" value="NP_001135996.1"/>
</dbReference>
<dbReference type="UCSC" id="uc004ejo.4">
    <property type="organism name" value="human"/>
</dbReference>
<dbReference type="AGR" id="HGNC:29353"/>
<dbReference type="CTD" id="80823"/>
<dbReference type="DisGeNET" id="80823"/>
<dbReference type="GeneCards" id="GPRASP3"/>
<dbReference type="HGNC" id="HGNC:29353">
    <property type="gene designation" value="GPRASP3"/>
</dbReference>
<dbReference type="HPA" id="ENSG00000198908">
    <property type="expression patterns" value="Low tissue specificity"/>
</dbReference>
<dbReference type="MIM" id="300921">
    <property type="type" value="gene"/>
</dbReference>
<dbReference type="neXtProt" id="NX_Q6PI77"/>
<dbReference type="OpenTargets" id="ENSG00000198908"/>
<dbReference type="PharmGKB" id="PA134895992"/>
<dbReference type="VEuPathDB" id="HostDB:ENSG00000198908"/>
<dbReference type="eggNOG" id="ENOG502RU0K">
    <property type="taxonomic scope" value="Eukaryota"/>
</dbReference>
<dbReference type="GeneTree" id="ENSGT00940000161990"/>
<dbReference type="HOGENOM" id="CLU_036908_0_0_1"/>
<dbReference type="InParanoid" id="Q6PI77"/>
<dbReference type="OMA" id="TWFWAGE"/>
<dbReference type="OrthoDB" id="9524277at2759"/>
<dbReference type="PAN-GO" id="Q6PI77">
    <property type="GO annotations" value="2 GO annotations based on evolutionary models"/>
</dbReference>
<dbReference type="PhylomeDB" id="Q6PI77"/>
<dbReference type="TreeFam" id="TF335652"/>
<dbReference type="PathwayCommons" id="Q6PI77"/>
<dbReference type="SignaLink" id="Q6PI77"/>
<dbReference type="BioGRID-ORCS" id="80823">
    <property type="hits" value="18 hits in 781 CRISPR screens"/>
</dbReference>
<dbReference type="GenomeRNAi" id="80823"/>
<dbReference type="Pharos" id="Q6PI77">
    <property type="development level" value="Tdark"/>
</dbReference>
<dbReference type="PRO" id="PR:Q6PI77"/>
<dbReference type="Proteomes" id="UP000005640">
    <property type="component" value="Chromosome X"/>
</dbReference>
<dbReference type="RNAct" id="Q6PI77">
    <property type="molecule type" value="protein"/>
</dbReference>
<dbReference type="Bgee" id="ENSG00000198908">
    <property type="expression patterns" value="Expressed in cortical plate and 110 other cell types or tissues"/>
</dbReference>
<dbReference type="GO" id="GO:0005829">
    <property type="term" value="C:cytosol"/>
    <property type="evidence" value="ECO:0000318"/>
    <property type="project" value="GO_Central"/>
</dbReference>
<dbReference type="GO" id="GO:0070062">
    <property type="term" value="C:extracellular exosome"/>
    <property type="evidence" value="ECO:0007005"/>
    <property type="project" value="UniProtKB"/>
</dbReference>
<dbReference type="GO" id="GO:0005634">
    <property type="term" value="C:nucleus"/>
    <property type="evidence" value="ECO:0000318"/>
    <property type="project" value="GO_Central"/>
</dbReference>
<dbReference type="GO" id="GO:0042803">
    <property type="term" value="F:protein homodimerization activity"/>
    <property type="evidence" value="ECO:0000250"/>
    <property type="project" value="CAFA"/>
</dbReference>
<dbReference type="GO" id="GO:0007611">
    <property type="term" value="P:learning or memory"/>
    <property type="evidence" value="ECO:0000250"/>
    <property type="project" value="CAFA"/>
</dbReference>
<dbReference type="GO" id="GO:0043524">
    <property type="term" value="P:negative regulation of neuron apoptotic process"/>
    <property type="evidence" value="ECO:0000250"/>
    <property type="project" value="CAFA"/>
</dbReference>
<dbReference type="GO" id="GO:0061003">
    <property type="term" value="P:positive regulation of dendritic spine morphogenesis"/>
    <property type="evidence" value="ECO:0000250"/>
    <property type="project" value="CAFA"/>
</dbReference>
<dbReference type="GO" id="GO:0050769">
    <property type="term" value="P:positive regulation of neurogenesis"/>
    <property type="evidence" value="ECO:0000250"/>
    <property type="project" value="CAFA"/>
</dbReference>
<dbReference type="GO" id="GO:0051965">
    <property type="term" value="P:positive regulation of synapse assembly"/>
    <property type="evidence" value="ECO:0000250"/>
    <property type="project" value="CAFA"/>
</dbReference>
<dbReference type="FunFam" id="1.25.10.10:FF:000757">
    <property type="entry name" value="BHLHB9 isoform 1"/>
    <property type="match status" value="1"/>
</dbReference>
<dbReference type="Gene3D" id="1.25.10.10">
    <property type="entry name" value="Leucine-rich Repeat Variant"/>
    <property type="match status" value="1"/>
</dbReference>
<dbReference type="InterPro" id="IPR011989">
    <property type="entry name" value="ARM-like"/>
</dbReference>
<dbReference type="InterPro" id="IPR006911">
    <property type="entry name" value="ARM-rpt_dom"/>
</dbReference>
<dbReference type="InterPro" id="IPR016024">
    <property type="entry name" value="ARM-type_fold"/>
</dbReference>
<dbReference type="InterPro" id="IPR043374">
    <property type="entry name" value="GASP1-3"/>
</dbReference>
<dbReference type="PANTHER" id="PTHR46414:SF2">
    <property type="entry name" value="G PROTEIN-COUPLED RECEPTOR ASSOCIATED SORTING PROTEIN 3"/>
    <property type="match status" value="1"/>
</dbReference>
<dbReference type="PANTHER" id="PTHR46414">
    <property type="entry name" value="PROTEIN BHLHB9-RELATED"/>
    <property type="match status" value="1"/>
</dbReference>
<dbReference type="Pfam" id="PF04826">
    <property type="entry name" value="Arm_2"/>
    <property type="match status" value="1"/>
</dbReference>
<dbReference type="SUPFAM" id="SSF48371">
    <property type="entry name" value="ARM repeat"/>
    <property type="match status" value="1"/>
</dbReference>